<comment type="function">
    <text>Rubredoxin is a small nonheme, iron protein lacking acid-labile sulfide. Its single Fe, chelated to 4 Cys, functions as an electron acceptor and may also stabilize the conformation of the molecule.</text>
</comment>
<comment type="cofactor">
    <cofactor>
        <name>Fe(3+)</name>
        <dbReference type="ChEBI" id="CHEBI:29034"/>
    </cofactor>
    <text>Binds 1 Fe(3+) ion per subunit.</text>
</comment>
<comment type="similarity">
    <text evidence="2">Belongs to the rubredoxin family.</text>
</comment>
<reference key="1">
    <citation type="journal article" date="1968" name="Biochemistry">
        <title>Nonheme iron proteins. IV. Structural studies of Micrococcus aerogenes rubredoxin.</title>
        <authorList>
            <person name="Bachmayer H."/>
            <person name="Benson A.M."/>
            <person name="Yasunobu K.T."/>
            <person name="Garrard W.T."/>
            <person name="Whiteley H.R."/>
        </authorList>
    </citation>
    <scope>PROTEIN SEQUENCE</scope>
</reference>
<dbReference type="PIR" id="A00272">
    <property type="entry name" value="RUPE"/>
</dbReference>
<dbReference type="SMR" id="P00267"/>
<dbReference type="GO" id="GO:0009055">
    <property type="term" value="F:electron transfer activity"/>
    <property type="evidence" value="ECO:0007669"/>
    <property type="project" value="TreeGrafter"/>
</dbReference>
<dbReference type="GO" id="GO:0005506">
    <property type="term" value="F:iron ion binding"/>
    <property type="evidence" value="ECO:0007669"/>
    <property type="project" value="InterPro"/>
</dbReference>
<dbReference type="GO" id="GO:0043448">
    <property type="term" value="P:alkane catabolic process"/>
    <property type="evidence" value="ECO:0007669"/>
    <property type="project" value="TreeGrafter"/>
</dbReference>
<dbReference type="CDD" id="cd00730">
    <property type="entry name" value="rubredoxin"/>
    <property type="match status" value="1"/>
</dbReference>
<dbReference type="Gene3D" id="2.20.28.10">
    <property type="match status" value="1"/>
</dbReference>
<dbReference type="InterPro" id="IPR024934">
    <property type="entry name" value="Rubredoxin-like_dom"/>
</dbReference>
<dbReference type="InterPro" id="IPR024935">
    <property type="entry name" value="Rubredoxin_dom"/>
</dbReference>
<dbReference type="InterPro" id="IPR050526">
    <property type="entry name" value="Rubredoxin_ET"/>
</dbReference>
<dbReference type="InterPro" id="IPR018527">
    <property type="entry name" value="Rubredoxin_Fe_BS"/>
</dbReference>
<dbReference type="PANTHER" id="PTHR47627">
    <property type="entry name" value="RUBREDOXIN"/>
    <property type="match status" value="1"/>
</dbReference>
<dbReference type="PANTHER" id="PTHR47627:SF1">
    <property type="entry name" value="RUBREDOXIN-1-RELATED"/>
    <property type="match status" value="1"/>
</dbReference>
<dbReference type="Pfam" id="PF00301">
    <property type="entry name" value="Rubredoxin"/>
    <property type="match status" value="1"/>
</dbReference>
<dbReference type="PRINTS" id="PR00163">
    <property type="entry name" value="RUBREDOXIN"/>
</dbReference>
<dbReference type="SUPFAM" id="SSF57802">
    <property type="entry name" value="Rubredoxin-like"/>
    <property type="match status" value="1"/>
</dbReference>
<dbReference type="PROSITE" id="PS00202">
    <property type="entry name" value="RUBREDOXIN"/>
    <property type="match status" value="1"/>
</dbReference>
<dbReference type="PROSITE" id="PS50903">
    <property type="entry name" value="RUBREDOXIN_LIKE"/>
    <property type="match status" value="1"/>
</dbReference>
<evidence type="ECO:0000255" key="1">
    <source>
        <dbReference type="PROSITE-ProRule" id="PRU00241"/>
    </source>
</evidence>
<evidence type="ECO:0000305" key="2"/>
<keyword id="KW-0903">Direct protein sequencing</keyword>
<keyword id="KW-0249">Electron transport</keyword>
<keyword id="KW-0408">Iron</keyword>
<keyword id="KW-0479">Metal-binding</keyword>
<keyword id="KW-0813">Transport</keyword>
<feature type="chain" id="PRO_0000135042" description="Rubredoxin">
    <location>
        <begin position="1"/>
        <end position="53"/>
    </location>
</feature>
<feature type="domain" description="Rubredoxin-like" evidence="1">
    <location>
        <begin position="1"/>
        <end position="53"/>
    </location>
</feature>
<feature type="binding site">
    <location>
        <position position="6"/>
    </location>
    <ligand>
        <name>Fe cation</name>
        <dbReference type="ChEBI" id="CHEBI:24875"/>
    </ligand>
</feature>
<feature type="binding site">
    <location>
        <position position="9"/>
    </location>
    <ligand>
        <name>Fe cation</name>
        <dbReference type="ChEBI" id="CHEBI:24875"/>
    </ligand>
</feature>
<feature type="binding site">
    <location>
        <position position="38"/>
    </location>
    <ligand>
        <name>Fe cation</name>
        <dbReference type="ChEBI" id="CHEBI:24875"/>
    </ligand>
</feature>
<feature type="binding site">
    <location>
        <position position="41"/>
    </location>
    <ligand>
        <name>Fe cation</name>
        <dbReference type="ChEBI" id="CHEBI:24875"/>
    </ligand>
</feature>
<accession>P00267</accession>
<protein>
    <recommendedName>
        <fullName>Rubredoxin</fullName>
        <shortName>Rd</shortName>
    </recommendedName>
</protein>
<sequence length="53" mass="5911">MQKFECTLCGYIYDPALVGPDTPDQDGAFEDVSENWVCPLCGAGKEDFEVYED</sequence>
<organism>
    <name type="scientific">Peptoniphilus asaccharolyticus</name>
    <name type="common">Peptostreptococcus asaccharolyticus</name>
    <dbReference type="NCBI Taxonomy" id="1258"/>
    <lineage>
        <taxon>Bacteria</taxon>
        <taxon>Bacillati</taxon>
        <taxon>Bacillota</taxon>
        <taxon>Tissierellia</taxon>
        <taxon>Tissierellales</taxon>
        <taxon>Peptoniphilaceae</taxon>
        <taxon>Peptoniphilus</taxon>
    </lineage>
</organism>
<proteinExistence type="evidence at protein level"/>
<name>RUBR_PEPAS</name>